<dbReference type="EC" id="2.1.1.74" evidence="1"/>
<dbReference type="EMBL" id="AE007317">
    <property type="protein sequence ID" value="AAK99648.1"/>
    <property type="molecule type" value="Genomic_DNA"/>
</dbReference>
<dbReference type="PIR" id="D97977">
    <property type="entry name" value="D97977"/>
</dbReference>
<dbReference type="RefSeq" id="NP_358438.1">
    <property type="nucleotide sequence ID" value="NC_003098.1"/>
</dbReference>
<dbReference type="RefSeq" id="WP_000083698.1">
    <property type="nucleotide sequence ID" value="NC_003098.1"/>
</dbReference>
<dbReference type="SMR" id="Q8DQ51"/>
<dbReference type="STRING" id="171101.spr0844"/>
<dbReference type="KEGG" id="spr:spr0844"/>
<dbReference type="PATRIC" id="fig|171101.6.peg.932"/>
<dbReference type="eggNOG" id="COG1206">
    <property type="taxonomic scope" value="Bacteria"/>
</dbReference>
<dbReference type="HOGENOM" id="CLU_033057_1_0_9"/>
<dbReference type="Proteomes" id="UP000000586">
    <property type="component" value="Chromosome"/>
</dbReference>
<dbReference type="GO" id="GO:0005829">
    <property type="term" value="C:cytosol"/>
    <property type="evidence" value="ECO:0000318"/>
    <property type="project" value="GO_Central"/>
</dbReference>
<dbReference type="GO" id="GO:0050660">
    <property type="term" value="F:flavin adenine dinucleotide binding"/>
    <property type="evidence" value="ECO:0000318"/>
    <property type="project" value="GO_Central"/>
</dbReference>
<dbReference type="GO" id="GO:0047151">
    <property type="term" value="F:tRNA (uracil(54)-C5)-methyltransferase activity, 5,10-methylenetetrahydrofolate-dependent"/>
    <property type="evidence" value="ECO:0007669"/>
    <property type="project" value="UniProtKB-UniRule"/>
</dbReference>
<dbReference type="GO" id="GO:0030488">
    <property type="term" value="P:tRNA methylation"/>
    <property type="evidence" value="ECO:0000318"/>
    <property type="project" value="GO_Central"/>
</dbReference>
<dbReference type="GO" id="GO:0002098">
    <property type="term" value="P:tRNA wobble uridine modification"/>
    <property type="evidence" value="ECO:0000318"/>
    <property type="project" value="GO_Central"/>
</dbReference>
<dbReference type="FunFam" id="3.50.50.60:FF:000035">
    <property type="entry name" value="Methylenetetrahydrofolate--tRNA-(uracil-5-)-methyltransferase TrmFO"/>
    <property type="match status" value="1"/>
</dbReference>
<dbReference type="FunFam" id="3.50.50.60:FF:000040">
    <property type="entry name" value="Methylenetetrahydrofolate--tRNA-(uracil-5-)-methyltransferase TrmFO"/>
    <property type="match status" value="1"/>
</dbReference>
<dbReference type="Gene3D" id="3.50.50.60">
    <property type="entry name" value="FAD/NAD(P)-binding domain"/>
    <property type="match status" value="2"/>
</dbReference>
<dbReference type="HAMAP" id="MF_01037">
    <property type="entry name" value="TrmFO"/>
    <property type="match status" value="1"/>
</dbReference>
<dbReference type="InterPro" id="IPR036188">
    <property type="entry name" value="FAD/NAD-bd_sf"/>
</dbReference>
<dbReference type="InterPro" id="IPR002218">
    <property type="entry name" value="MnmG-rel"/>
</dbReference>
<dbReference type="InterPro" id="IPR020595">
    <property type="entry name" value="MnmG-rel_CS"/>
</dbReference>
<dbReference type="InterPro" id="IPR040131">
    <property type="entry name" value="MnmG_N"/>
</dbReference>
<dbReference type="InterPro" id="IPR004417">
    <property type="entry name" value="TrmFO"/>
</dbReference>
<dbReference type="NCBIfam" id="TIGR00137">
    <property type="entry name" value="gid_trmFO"/>
    <property type="match status" value="1"/>
</dbReference>
<dbReference type="NCBIfam" id="NF003739">
    <property type="entry name" value="PRK05335.1"/>
    <property type="match status" value="1"/>
</dbReference>
<dbReference type="PANTHER" id="PTHR11806">
    <property type="entry name" value="GLUCOSE INHIBITED DIVISION PROTEIN A"/>
    <property type="match status" value="1"/>
</dbReference>
<dbReference type="PANTHER" id="PTHR11806:SF2">
    <property type="entry name" value="METHYLENETETRAHYDROFOLATE--TRNA-(URACIL-5-)-METHYLTRANSFERASE TRMFO"/>
    <property type="match status" value="1"/>
</dbReference>
<dbReference type="Pfam" id="PF01134">
    <property type="entry name" value="GIDA"/>
    <property type="match status" value="1"/>
</dbReference>
<dbReference type="SUPFAM" id="SSF51905">
    <property type="entry name" value="FAD/NAD(P)-binding domain"/>
    <property type="match status" value="1"/>
</dbReference>
<dbReference type="PROSITE" id="PS01281">
    <property type="entry name" value="GIDA_2"/>
    <property type="match status" value="1"/>
</dbReference>
<keyword id="KW-0963">Cytoplasm</keyword>
<keyword id="KW-0274">FAD</keyword>
<keyword id="KW-0285">Flavoprotein</keyword>
<keyword id="KW-0489">Methyltransferase</keyword>
<keyword id="KW-0520">NAD</keyword>
<keyword id="KW-0521">NADP</keyword>
<keyword id="KW-1185">Reference proteome</keyword>
<keyword id="KW-0808">Transferase</keyword>
<keyword id="KW-0819">tRNA processing</keyword>
<evidence type="ECO:0000255" key="1">
    <source>
        <dbReference type="HAMAP-Rule" id="MF_01037"/>
    </source>
</evidence>
<reference key="1">
    <citation type="journal article" date="2001" name="J. Bacteriol.">
        <title>Genome of the bacterium Streptococcus pneumoniae strain R6.</title>
        <authorList>
            <person name="Hoskins J."/>
            <person name="Alborn W.E. Jr."/>
            <person name="Arnold J."/>
            <person name="Blaszczak L.C."/>
            <person name="Burgett S."/>
            <person name="DeHoff B.S."/>
            <person name="Estrem S.T."/>
            <person name="Fritz L."/>
            <person name="Fu D.-J."/>
            <person name="Fuller W."/>
            <person name="Geringer C."/>
            <person name="Gilmour R."/>
            <person name="Glass J.S."/>
            <person name="Khoja H."/>
            <person name="Kraft A.R."/>
            <person name="Lagace R.E."/>
            <person name="LeBlanc D.J."/>
            <person name="Lee L.N."/>
            <person name="Lefkowitz E.J."/>
            <person name="Lu J."/>
            <person name="Matsushima P."/>
            <person name="McAhren S.M."/>
            <person name="McHenney M."/>
            <person name="McLeaster K."/>
            <person name="Mundy C.W."/>
            <person name="Nicas T.I."/>
            <person name="Norris F.H."/>
            <person name="O'Gara M."/>
            <person name="Peery R.B."/>
            <person name="Robertson G.T."/>
            <person name="Rockey P."/>
            <person name="Sun P.-M."/>
            <person name="Winkler M.E."/>
            <person name="Yang Y."/>
            <person name="Young-Bellido M."/>
            <person name="Zhao G."/>
            <person name="Zook C.A."/>
            <person name="Baltz R.H."/>
            <person name="Jaskunas S.R."/>
            <person name="Rosteck P.R. Jr."/>
            <person name="Skatrud P.L."/>
            <person name="Glass J.I."/>
        </authorList>
    </citation>
    <scope>NUCLEOTIDE SEQUENCE [LARGE SCALE GENOMIC DNA]</scope>
    <source>
        <strain>ATCC BAA-255 / R6</strain>
    </source>
</reference>
<comment type="function">
    <text evidence="1">Catalyzes the folate-dependent formation of 5-methyl-uridine at position 54 (M-5-U54) in all tRNAs.</text>
</comment>
<comment type="catalytic activity">
    <reaction evidence="1">
        <text>uridine(54) in tRNA + (6R)-5,10-methylene-5,6,7,8-tetrahydrofolate + NADH + H(+) = 5-methyluridine(54) in tRNA + (6S)-5,6,7,8-tetrahydrofolate + NAD(+)</text>
        <dbReference type="Rhea" id="RHEA:16873"/>
        <dbReference type="Rhea" id="RHEA-COMP:10167"/>
        <dbReference type="Rhea" id="RHEA-COMP:10193"/>
        <dbReference type="ChEBI" id="CHEBI:15378"/>
        <dbReference type="ChEBI" id="CHEBI:15636"/>
        <dbReference type="ChEBI" id="CHEBI:57453"/>
        <dbReference type="ChEBI" id="CHEBI:57540"/>
        <dbReference type="ChEBI" id="CHEBI:57945"/>
        <dbReference type="ChEBI" id="CHEBI:65315"/>
        <dbReference type="ChEBI" id="CHEBI:74447"/>
        <dbReference type="EC" id="2.1.1.74"/>
    </reaction>
</comment>
<comment type="catalytic activity">
    <reaction evidence="1">
        <text>uridine(54) in tRNA + (6R)-5,10-methylene-5,6,7,8-tetrahydrofolate + NADPH + H(+) = 5-methyluridine(54) in tRNA + (6S)-5,6,7,8-tetrahydrofolate + NADP(+)</text>
        <dbReference type="Rhea" id="RHEA:62372"/>
        <dbReference type="Rhea" id="RHEA-COMP:10167"/>
        <dbReference type="Rhea" id="RHEA-COMP:10193"/>
        <dbReference type="ChEBI" id="CHEBI:15378"/>
        <dbReference type="ChEBI" id="CHEBI:15636"/>
        <dbReference type="ChEBI" id="CHEBI:57453"/>
        <dbReference type="ChEBI" id="CHEBI:57783"/>
        <dbReference type="ChEBI" id="CHEBI:58349"/>
        <dbReference type="ChEBI" id="CHEBI:65315"/>
        <dbReference type="ChEBI" id="CHEBI:74447"/>
        <dbReference type="EC" id="2.1.1.74"/>
    </reaction>
</comment>
<comment type="cofactor">
    <cofactor evidence="1">
        <name>FAD</name>
        <dbReference type="ChEBI" id="CHEBI:57692"/>
    </cofactor>
</comment>
<comment type="subcellular location">
    <subcellularLocation>
        <location evidence="1">Cytoplasm</location>
    </subcellularLocation>
</comment>
<comment type="similarity">
    <text evidence="1">Belongs to the MnmG family. TrmFO subfamily.</text>
</comment>
<sequence length="444" mass="49287">MSQSYINVIGAGLAGSEAAYQIAERGIPVKLYEMRGVKSTPQHKTDNFAELVCSNSLRGDALTNAVGLLKEEMRRLGSVILESAEATRVPAGGALAVDRDGFSQMVTEKVANHPLIEVVRDEITELPTDVITVIATGPLTSDALAEKIHALNDGDGFYFYDAAAPIIDVNTIDMSKVYLKSRYDKGEAAYLNAPMTKQEFMDFHEALVNAEEAPLNSFEKEKYFEGCMPIEVMAKRGIKTMLYGPMKPVGLEYPDDYTGPRDGEFKTPYAVVQLRQDNAAGSLYNIVGFQTHLKWGEQKRVFQMIPGLENAEFVRYGVMHRNSYMDSPNLLEQTYRSKKQPNLFFAGQMTGVEGYVESAASGLVAGINAARLFKEESEVIFPETTAIGSLAHYITHADSKHFQPMNVNFGIIKELEGERIRDKKARYEKIAERALADLEEFLTV</sequence>
<name>TRMFO_STRR6</name>
<organism>
    <name type="scientific">Streptococcus pneumoniae (strain ATCC BAA-255 / R6)</name>
    <dbReference type="NCBI Taxonomy" id="171101"/>
    <lineage>
        <taxon>Bacteria</taxon>
        <taxon>Bacillati</taxon>
        <taxon>Bacillota</taxon>
        <taxon>Bacilli</taxon>
        <taxon>Lactobacillales</taxon>
        <taxon>Streptococcaceae</taxon>
        <taxon>Streptococcus</taxon>
    </lineage>
</organism>
<feature type="chain" id="PRO_0000117273" description="Methylenetetrahydrofolate--tRNA-(uracil-5-)-methyltransferase TrmFO">
    <location>
        <begin position="1"/>
        <end position="444"/>
    </location>
</feature>
<feature type="binding site" evidence="1">
    <location>
        <begin position="10"/>
        <end position="15"/>
    </location>
    <ligand>
        <name>FAD</name>
        <dbReference type="ChEBI" id="CHEBI:57692"/>
    </ligand>
</feature>
<gene>
    <name evidence="1" type="primary">trmFO</name>
    <name type="synonym">gid</name>
    <name type="ordered locus">spr0844</name>
</gene>
<proteinExistence type="inferred from homology"/>
<protein>
    <recommendedName>
        <fullName evidence="1">Methylenetetrahydrofolate--tRNA-(uracil-5-)-methyltransferase TrmFO</fullName>
        <ecNumber evidence="1">2.1.1.74</ecNumber>
    </recommendedName>
    <alternativeName>
        <fullName evidence="1">Folate-dependent tRNA (uracil-5-)-methyltransferase</fullName>
    </alternativeName>
    <alternativeName>
        <fullName evidence="1">Folate-dependent tRNA(M-5-U54)-methyltransferase</fullName>
    </alternativeName>
</protein>
<accession>Q8DQ51</accession>